<sequence length="233" mass="26675">MRWLAYLAGCLIVGVVAMQVYFFLQIAAWQVVNPSSTTFMRAERWRLCGFNFWSCPVQRQWVRYDEISRNIKRAVIASEDADFVNHPGYELDAMLDAWERNKQRGRIVRGGSTITQQLAKNLFLSSEQNYLRKGQELAITWMLELWLDKQRIFEIYLNSVEWGEGVFGVEAAAQHYFHTSASKLSVGQAARLAAALPAPKCFDKKQYCANVHVNFRVKASIIARRMGAATLPD</sequence>
<dbReference type="EC" id="2.4.99.28" evidence="1"/>
<dbReference type="EMBL" id="CP000352">
    <property type="protein sequence ID" value="ABF09925.1"/>
    <property type="molecule type" value="Genomic_DNA"/>
</dbReference>
<dbReference type="RefSeq" id="WP_011517555.1">
    <property type="nucleotide sequence ID" value="NC_007973.1"/>
</dbReference>
<dbReference type="SMR" id="Q1LIV1"/>
<dbReference type="STRING" id="266264.Rmet_3053"/>
<dbReference type="CAZy" id="GT51">
    <property type="family name" value="Glycosyltransferase Family 51"/>
</dbReference>
<dbReference type="KEGG" id="rme:Rmet_3053"/>
<dbReference type="eggNOG" id="COG0744">
    <property type="taxonomic scope" value="Bacteria"/>
</dbReference>
<dbReference type="HOGENOM" id="CLU_006354_1_0_4"/>
<dbReference type="UniPathway" id="UPA00219"/>
<dbReference type="Proteomes" id="UP000002429">
    <property type="component" value="Chromosome"/>
</dbReference>
<dbReference type="GO" id="GO:0009274">
    <property type="term" value="C:peptidoglycan-based cell wall"/>
    <property type="evidence" value="ECO:0007669"/>
    <property type="project" value="InterPro"/>
</dbReference>
<dbReference type="GO" id="GO:0005886">
    <property type="term" value="C:plasma membrane"/>
    <property type="evidence" value="ECO:0007669"/>
    <property type="project" value="UniProtKB-SubCell"/>
</dbReference>
<dbReference type="GO" id="GO:0016763">
    <property type="term" value="F:pentosyltransferase activity"/>
    <property type="evidence" value="ECO:0007669"/>
    <property type="project" value="InterPro"/>
</dbReference>
<dbReference type="GO" id="GO:0008955">
    <property type="term" value="F:peptidoglycan glycosyltransferase activity"/>
    <property type="evidence" value="ECO:0007669"/>
    <property type="project" value="UniProtKB-UniRule"/>
</dbReference>
<dbReference type="GO" id="GO:0071555">
    <property type="term" value="P:cell wall organization"/>
    <property type="evidence" value="ECO:0007669"/>
    <property type="project" value="UniProtKB-KW"/>
</dbReference>
<dbReference type="GO" id="GO:0009252">
    <property type="term" value="P:peptidoglycan biosynthetic process"/>
    <property type="evidence" value="ECO:0007669"/>
    <property type="project" value="UniProtKB-UniRule"/>
</dbReference>
<dbReference type="GO" id="GO:0008360">
    <property type="term" value="P:regulation of cell shape"/>
    <property type="evidence" value="ECO:0007669"/>
    <property type="project" value="UniProtKB-KW"/>
</dbReference>
<dbReference type="Gene3D" id="1.10.3810.10">
    <property type="entry name" value="Biosynthetic peptidoglycan transglycosylase-like"/>
    <property type="match status" value="1"/>
</dbReference>
<dbReference type="HAMAP" id="MF_00766">
    <property type="entry name" value="PGT_MtgA"/>
    <property type="match status" value="1"/>
</dbReference>
<dbReference type="InterPro" id="IPR001264">
    <property type="entry name" value="Glyco_trans_51"/>
</dbReference>
<dbReference type="InterPro" id="IPR023346">
    <property type="entry name" value="Lysozyme-like_dom_sf"/>
</dbReference>
<dbReference type="InterPro" id="IPR036950">
    <property type="entry name" value="PBP_transglycosylase"/>
</dbReference>
<dbReference type="InterPro" id="IPR011812">
    <property type="entry name" value="Pep_trsgly"/>
</dbReference>
<dbReference type="NCBIfam" id="TIGR02070">
    <property type="entry name" value="mono_pep_trsgly"/>
    <property type="match status" value="1"/>
</dbReference>
<dbReference type="PANTHER" id="PTHR30400:SF0">
    <property type="entry name" value="BIOSYNTHETIC PEPTIDOGLYCAN TRANSGLYCOSYLASE"/>
    <property type="match status" value="1"/>
</dbReference>
<dbReference type="PANTHER" id="PTHR30400">
    <property type="entry name" value="MONOFUNCTIONAL BIOSYNTHETIC PEPTIDOGLYCAN TRANSGLYCOSYLASE"/>
    <property type="match status" value="1"/>
</dbReference>
<dbReference type="Pfam" id="PF00912">
    <property type="entry name" value="Transgly"/>
    <property type="match status" value="1"/>
</dbReference>
<dbReference type="SUPFAM" id="SSF53955">
    <property type="entry name" value="Lysozyme-like"/>
    <property type="match status" value="1"/>
</dbReference>
<gene>
    <name evidence="1" type="primary">mtgA</name>
    <name type="ordered locus">Rmet_3053</name>
</gene>
<proteinExistence type="inferred from homology"/>
<protein>
    <recommendedName>
        <fullName evidence="1">Biosynthetic peptidoglycan transglycosylase</fullName>
        <ecNumber evidence="1">2.4.99.28</ecNumber>
    </recommendedName>
    <alternativeName>
        <fullName evidence="1">Glycan polymerase</fullName>
    </alternativeName>
    <alternativeName>
        <fullName evidence="1">Peptidoglycan glycosyltransferase MtgA</fullName>
        <shortName evidence="1">PGT</shortName>
    </alternativeName>
</protein>
<keyword id="KW-0997">Cell inner membrane</keyword>
<keyword id="KW-1003">Cell membrane</keyword>
<keyword id="KW-0133">Cell shape</keyword>
<keyword id="KW-0961">Cell wall biogenesis/degradation</keyword>
<keyword id="KW-0328">Glycosyltransferase</keyword>
<keyword id="KW-0472">Membrane</keyword>
<keyword id="KW-0573">Peptidoglycan synthesis</keyword>
<keyword id="KW-1185">Reference proteome</keyword>
<keyword id="KW-0808">Transferase</keyword>
<keyword id="KW-0812">Transmembrane</keyword>
<keyword id="KW-1133">Transmembrane helix</keyword>
<reference key="1">
    <citation type="journal article" date="2010" name="PLoS ONE">
        <title>The complete genome sequence of Cupriavidus metallidurans strain CH34, a master survivalist in harsh and anthropogenic environments.</title>
        <authorList>
            <person name="Janssen P.J."/>
            <person name="Van Houdt R."/>
            <person name="Moors H."/>
            <person name="Monsieurs P."/>
            <person name="Morin N."/>
            <person name="Michaux A."/>
            <person name="Benotmane M.A."/>
            <person name="Leys N."/>
            <person name="Vallaeys T."/>
            <person name="Lapidus A."/>
            <person name="Monchy S."/>
            <person name="Medigue C."/>
            <person name="Taghavi S."/>
            <person name="McCorkle S."/>
            <person name="Dunn J."/>
            <person name="van der Lelie D."/>
            <person name="Mergeay M."/>
        </authorList>
    </citation>
    <scope>NUCLEOTIDE SEQUENCE [LARGE SCALE GENOMIC DNA]</scope>
    <source>
        <strain>ATCC 43123 / DSM 2839 / NBRC 102507 / CH34</strain>
    </source>
</reference>
<comment type="function">
    <text evidence="1">Peptidoglycan polymerase that catalyzes glycan chain elongation from lipid-linked precursors.</text>
</comment>
<comment type="catalytic activity">
    <reaction evidence="1">
        <text>[GlcNAc-(1-&gt;4)-Mur2Ac(oyl-L-Ala-gamma-D-Glu-L-Lys-D-Ala-D-Ala)](n)-di-trans,octa-cis-undecaprenyl diphosphate + beta-D-GlcNAc-(1-&gt;4)-Mur2Ac(oyl-L-Ala-gamma-D-Glu-L-Lys-D-Ala-D-Ala)-di-trans,octa-cis-undecaprenyl diphosphate = [GlcNAc-(1-&gt;4)-Mur2Ac(oyl-L-Ala-gamma-D-Glu-L-Lys-D-Ala-D-Ala)](n+1)-di-trans,octa-cis-undecaprenyl diphosphate + di-trans,octa-cis-undecaprenyl diphosphate + H(+)</text>
        <dbReference type="Rhea" id="RHEA:23708"/>
        <dbReference type="Rhea" id="RHEA-COMP:9602"/>
        <dbReference type="Rhea" id="RHEA-COMP:9603"/>
        <dbReference type="ChEBI" id="CHEBI:15378"/>
        <dbReference type="ChEBI" id="CHEBI:58405"/>
        <dbReference type="ChEBI" id="CHEBI:60033"/>
        <dbReference type="ChEBI" id="CHEBI:78435"/>
        <dbReference type="EC" id="2.4.99.28"/>
    </reaction>
</comment>
<comment type="pathway">
    <text evidence="1">Cell wall biogenesis; peptidoglycan biosynthesis.</text>
</comment>
<comment type="subcellular location">
    <subcellularLocation>
        <location evidence="1">Cell inner membrane</location>
        <topology evidence="1">Single-pass membrane protein</topology>
    </subcellularLocation>
</comment>
<comment type="similarity">
    <text evidence="1">Belongs to the glycosyltransferase 51 family.</text>
</comment>
<organism>
    <name type="scientific">Cupriavidus metallidurans (strain ATCC 43123 / DSM 2839 / NBRC 102507 / CH34)</name>
    <name type="common">Ralstonia metallidurans</name>
    <dbReference type="NCBI Taxonomy" id="266264"/>
    <lineage>
        <taxon>Bacteria</taxon>
        <taxon>Pseudomonadati</taxon>
        <taxon>Pseudomonadota</taxon>
        <taxon>Betaproteobacteria</taxon>
        <taxon>Burkholderiales</taxon>
        <taxon>Burkholderiaceae</taxon>
        <taxon>Cupriavidus</taxon>
    </lineage>
</organism>
<feature type="chain" id="PRO_0000257684" description="Biosynthetic peptidoglycan transglycosylase">
    <location>
        <begin position="1"/>
        <end position="233"/>
    </location>
</feature>
<feature type="transmembrane region" description="Helical" evidence="1">
    <location>
        <begin position="4"/>
        <end position="24"/>
    </location>
</feature>
<evidence type="ECO:0000255" key="1">
    <source>
        <dbReference type="HAMAP-Rule" id="MF_00766"/>
    </source>
</evidence>
<name>MTGA_CUPMC</name>
<accession>Q1LIV1</accession>